<feature type="chain" id="PRO_0000381084" description="8-amino-7-oxononanoate synthase">
    <location>
        <begin position="1"/>
        <end position="396"/>
    </location>
</feature>
<feature type="binding site" evidence="1">
    <location>
        <position position="19"/>
    </location>
    <ligand>
        <name>substrate</name>
    </ligand>
</feature>
<feature type="binding site" evidence="1">
    <location>
        <begin position="106"/>
        <end position="107"/>
    </location>
    <ligand>
        <name>pyridoxal 5'-phosphate</name>
        <dbReference type="ChEBI" id="CHEBI:597326"/>
    </ligand>
</feature>
<feature type="binding site" evidence="1">
    <location>
        <position position="131"/>
    </location>
    <ligand>
        <name>substrate</name>
    </ligand>
</feature>
<feature type="binding site" evidence="1">
    <location>
        <position position="176"/>
    </location>
    <ligand>
        <name>pyridoxal 5'-phosphate</name>
        <dbReference type="ChEBI" id="CHEBI:597326"/>
    </ligand>
</feature>
<feature type="binding site" evidence="1">
    <location>
        <position position="204"/>
    </location>
    <ligand>
        <name>pyridoxal 5'-phosphate</name>
        <dbReference type="ChEBI" id="CHEBI:597326"/>
    </ligand>
</feature>
<feature type="binding site" evidence="1">
    <location>
        <position position="233"/>
    </location>
    <ligand>
        <name>pyridoxal 5'-phosphate</name>
        <dbReference type="ChEBI" id="CHEBI:597326"/>
    </ligand>
</feature>
<feature type="binding site" evidence="1">
    <location>
        <position position="350"/>
    </location>
    <ligand>
        <name>substrate</name>
    </ligand>
</feature>
<feature type="modified residue" description="N6-(pyridoxal phosphate)lysine" evidence="1">
    <location>
        <position position="236"/>
    </location>
</feature>
<proteinExistence type="inferred from homology"/>
<accession>Q4ZMA9</accession>
<reference key="1">
    <citation type="journal article" date="2005" name="Proc. Natl. Acad. Sci. U.S.A.">
        <title>Comparison of the complete genome sequences of Pseudomonas syringae pv. syringae B728a and pv. tomato DC3000.</title>
        <authorList>
            <person name="Feil H."/>
            <person name="Feil W.S."/>
            <person name="Chain P."/>
            <person name="Larimer F."/>
            <person name="Dibartolo G."/>
            <person name="Copeland A."/>
            <person name="Lykidis A."/>
            <person name="Trong S."/>
            <person name="Nolan M."/>
            <person name="Goltsman E."/>
            <person name="Thiel J."/>
            <person name="Malfatti S."/>
            <person name="Loper J.E."/>
            <person name="Lapidus A."/>
            <person name="Detter J.C."/>
            <person name="Land M."/>
            <person name="Richardson P.M."/>
            <person name="Kyrpides N.C."/>
            <person name="Ivanova N."/>
            <person name="Lindow S.E."/>
        </authorList>
    </citation>
    <scope>NUCLEOTIDE SEQUENCE [LARGE SCALE GENOMIC DNA]</scope>
    <source>
        <strain>B728a</strain>
    </source>
</reference>
<protein>
    <recommendedName>
        <fullName evidence="1">8-amino-7-oxononanoate synthase</fullName>
        <shortName evidence="1">AONS</shortName>
        <ecNumber evidence="1">2.3.1.47</ecNumber>
    </recommendedName>
    <alternativeName>
        <fullName evidence="1">7-keto-8-amino-pelargonic acid synthase</fullName>
        <shortName evidence="1">7-KAP synthase</shortName>
        <shortName evidence="1">KAPA synthase</shortName>
    </alternativeName>
    <alternativeName>
        <fullName evidence="1">8-amino-7-ketopelargonate synthase</fullName>
    </alternativeName>
</protein>
<sequence length="396" mass="42608">MSFDLRTRLDARRAAHLYRQRPLLQSPQGPQVIVDGQPLLAFCNNDYMGLANHPEVIAAWQAGAERWGVGGGASHLVIGHSAPHHELEEALAELTGRPRALLFSNGYMANLGAVTALVGQGDTVLEDRLNHASLLDAGLLSGARFSRYLHNDVSSLEARLEKSVGDTLVVTDGVFSMDGDIADLPALARSAKAKGAWLMVDDAHGFGPLGANGAGIVEHFGLSMDDVPVLVGTLGKSFGTSGAFVAGSEELIETLIQFARPYIYTTSQPPALACATLKSLQLLRTEHWRREHLTRLIQQFRRGAEQIGLQLMDSFTPIQPIMIGDAGRALHLSQLLRERGLLVTAIRPPTVPAGSARLRVTLSAAHSEADVQLLLNTLEQCYPLLDASHSSEPVHA</sequence>
<organism>
    <name type="scientific">Pseudomonas syringae pv. syringae (strain B728a)</name>
    <dbReference type="NCBI Taxonomy" id="205918"/>
    <lineage>
        <taxon>Bacteria</taxon>
        <taxon>Pseudomonadati</taxon>
        <taxon>Pseudomonadota</taxon>
        <taxon>Gammaproteobacteria</taxon>
        <taxon>Pseudomonadales</taxon>
        <taxon>Pseudomonadaceae</taxon>
        <taxon>Pseudomonas</taxon>
        <taxon>Pseudomonas syringae</taxon>
    </lineage>
</organism>
<dbReference type="EC" id="2.3.1.47" evidence="1"/>
<dbReference type="EMBL" id="CP000075">
    <property type="protein sequence ID" value="AAY39713.1"/>
    <property type="molecule type" value="Genomic_DNA"/>
</dbReference>
<dbReference type="RefSeq" id="WP_011269172.1">
    <property type="nucleotide sequence ID" value="NC_007005.1"/>
</dbReference>
<dbReference type="RefSeq" id="YP_237751.1">
    <property type="nucleotide sequence ID" value="NC_007005.1"/>
</dbReference>
<dbReference type="SMR" id="Q4ZMA9"/>
<dbReference type="STRING" id="205918.Psyr_4686"/>
<dbReference type="KEGG" id="psb:Psyr_4686"/>
<dbReference type="PATRIC" id="fig|205918.7.peg.4832"/>
<dbReference type="eggNOG" id="COG0156">
    <property type="taxonomic scope" value="Bacteria"/>
</dbReference>
<dbReference type="HOGENOM" id="CLU_015846_11_0_6"/>
<dbReference type="OrthoDB" id="9807157at2"/>
<dbReference type="UniPathway" id="UPA00078"/>
<dbReference type="Proteomes" id="UP000000426">
    <property type="component" value="Chromosome"/>
</dbReference>
<dbReference type="GO" id="GO:0008710">
    <property type="term" value="F:8-amino-7-oxononanoate synthase activity"/>
    <property type="evidence" value="ECO:0007669"/>
    <property type="project" value="UniProtKB-UniRule"/>
</dbReference>
<dbReference type="GO" id="GO:0030170">
    <property type="term" value="F:pyridoxal phosphate binding"/>
    <property type="evidence" value="ECO:0007669"/>
    <property type="project" value="UniProtKB-UniRule"/>
</dbReference>
<dbReference type="GO" id="GO:0009102">
    <property type="term" value="P:biotin biosynthetic process"/>
    <property type="evidence" value="ECO:0007669"/>
    <property type="project" value="UniProtKB-UniRule"/>
</dbReference>
<dbReference type="CDD" id="cd06454">
    <property type="entry name" value="KBL_like"/>
    <property type="match status" value="1"/>
</dbReference>
<dbReference type="Gene3D" id="3.90.1150.10">
    <property type="entry name" value="Aspartate Aminotransferase, domain 1"/>
    <property type="match status" value="1"/>
</dbReference>
<dbReference type="Gene3D" id="3.40.640.10">
    <property type="entry name" value="Type I PLP-dependent aspartate aminotransferase-like (Major domain)"/>
    <property type="match status" value="1"/>
</dbReference>
<dbReference type="HAMAP" id="MF_01693">
    <property type="entry name" value="BioF_aminotrans_2"/>
    <property type="match status" value="1"/>
</dbReference>
<dbReference type="InterPro" id="IPR001917">
    <property type="entry name" value="Aminotrans_II_pyridoxalP_BS"/>
</dbReference>
<dbReference type="InterPro" id="IPR004839">
    <property type="entry name" value="Aminotransferase_I/II_large"/>
</dbReference>
<dbReference type="InterPro" id="IPR050087">
    <property type="entry name" value="AON_synthase_class-II"/>
</dbReference>
<dbReference type="InterPro" id="IPR004723">
    <property type="entry name" value="AONS_Archaea/Proteobacteria"/>
</dbReference>
<dbReference type="InterPro" id="IPR022834">
    <property type="entry name" value="AONS_Proteobacteria"/>
</dbReference>
<dbReference type="InterPro" id="IPR015424">
    <property type="entry name" value="PyrdxlP-dep_Trfase"/>
</dbReference>
<dbReference type="InterPro" id="IPR015421">
    <property type="entry name" value="PyrdxlP-dep_Trfase_major"/>
</dbReference>
<dbReference type="InterPro" id="IPR015422">
    <property type="entry name" value="PyrdxlP-dep_Trfase_small"/>
</dbReference>
<dbReference type="NCBIfam" id="TIGR00858">
    <property type="entry name" value="bioF"/>
    <property type="match status" value="1"/>
</dbReference>
<dbReference type="PANTHER" id="PTHR13693:SF100">
    <property type="entry name" value="8-AMINO-7-OXONONANOATE SYNTHASE"/>
    <property type="match status" value="1"/>
</dbReference>
<dbReference type="PANTHER" id="PTHR13693">
    <property type="entry name" value="CLASS II AMINOTRANSFERASE/8-AMINO-7-OXONONANOATE SYNTHASE"/>
    <property type="match status" value="1"/>
</dbReference>
<dbReference type="Pfam" id="PF00155">
    <property type="entry name" value="Aminotran_1_2"/>
    <property type="match status" value="1"/>
</dbReference>
<dbReference type="SUPFAM" id="SSF53383">
    <property type="entry name" value="PLP-dependent transferases"/>
    <property type="match status" value="1"/>
</dbReference>
<dbReference type="PROSITE" id="PS00599">
    <property type="entry name" value="AA_TRANSFER_CLASS_2"/>
    <property type="match status" value="1"/>
</dbReference>
<comment type="function">
    <text evidence="1">Catalyzes the decarboxylative condensation of pimeloyl-[acyl-carrier protein] and L-alanine to produce 8-amino-7-oxononanoate (AON), [acyl-carrier protein], and carbon dioxide.</text>
</comment>
<comment type="catalytic activity">
    <reaction evidence="1">
        <text>6-carboxyhexanoyl-[ACP] + L-alanine + H(+) = (8S)-8-amino-7-oxononanoate + holo-[ACP] + CO2</text>
        <dbReference type="Rhea" id="RHEA:42288"/>
        <dbReference type="Rhea" id="RHEA-COMP:9685"/>
        <dbReference type="Rhea" id="RHEA-COMP:9955"/>
        <dbReference type="ChEBI" id="CHEBI:15378"/>
        <dbReference type="ChEBI" id="CHEBI:16526"/>
        <dbReference type="ChEBI" id="CHEBI:57972"/>
        <dbReference type="ChEBI" id="CHEBI:64479"/>
        <dbReference type="ChEBI" id="CHEBI:78846"/>
        <dbReference type="ChEBI" id="CHEBI:149468"/>
        <dbReference type="EC" id="2.3.1.47"/>
    </reaction>
</comment>
<comment type="cofactor">
    <cofactor evidence="1">
        <name>pyridoxal 5'-phosphate</name>
        <dbReference type="ChEBI" id="CHEBI:597326"/>
    </cofactor>
</comment>
<comment type="pathway">
    <text evidence="1">Cofactor biosynthesis; biotin biosynthesis.</text>
</comment>
<comment type="subunit">
    <text evidence="1">Homodimer.</text>
</comment>
<comment type="similarity">
    <text evidence="1">Belongs to the class-II pyridoxal-phosphate-dependent aminotransferase family. BioF subfamily.</text>
</comment>
<gene>
    <name evidence="1" type="primary">bioF</name>
    <name type="ordered locus">Psyr_4686</name>
</gene>
<keyword id="KW-0093">Biotin biosynthesis</keyword>
<keyword id="KW-0663">Pyridoxal phosphate</keyword>
<keyword id="KW-0808">Transferase</keyword>
<evidence type="ECO:0000255" key="1">
    <source>
        <dbReference type="HAMAP-Rule" id="MF_01693"/>
    </source>
</evidence>
<name>BIOF_PSEU2</name>